<keyword id="KW-1185">Reference proteome</keyword>
<accession>B3QZF2</accession>
<evidence type="ECO:0000255" key="1">
    <source>
        <dbReference type="HAMAP-Rule" id="MF_00048"/>
    </source>
</evidence>
<comment type="similarity">
    <text evidence="1">Belongs to the UPF0102 family.</text>
</comment>
<feature type="chain" id="PRO_1000091230" description="UPF0102 protein Ctha_1382">
    <location>
        <begin position="1"/>
        <end position="129"/>
    </location>
</feature>
<organism>
    <name type="scientific">Chloroherpeton thalassium (strain ATCC 35110 / GB-78)</name>
    <dbReference type="NCBI Taxonomy" id="517418"/>
    <lineage>
        <taxon>Bacteria</taxon>
        <taxon>Pseudomonadati</taxon>
        <taxon>Chlorobiota</taxon>
        <taxon>Chlorobiia</taxon>
        <taxon>Chlorobiales</taxon>
        <taxon>Chloroherpetonaceae</taxon>
        <taxon>Chloroherpeton</taxon>
    </lineage>
</organism>
<protein>
    <recommendedName>
        <fullName evidence="1">UPF0102 protein Ctha_1382</fullName>
    </recommendedName>
</protein>
<reference key="1">
    <citation type="submission" date="2008-06" db="EMBL/GenBank/DDBJ databases">
        <title>Complete sequence of Chloroherpeton thalassium ATCC 35110.</title>
        <authorList>
            <consortium name="US DOE Joint Genome Institute"/>
            <person name="Lucas S."/>
            <person name="Copeland A."/>
            <person name="Lapidus A."/>
            <person name="Glavina del Rio T."/>
            <person name="Dalin E."/>
            <person name="Tice H."/>
            <person name="Bruce D."/>
            <person name="Goodwin L."/>
            <person name="Pitluck S."/>
            <person name="Schmutz J."/>
            <person name="Larimer F."/>
            <person name="Land M."/>
            <person name="Hauser L."/>
            <person name="Kyrpides N."/>
            <person name="Mikhailova N."/>
            <person name="Liu Z."/>
            <person name="Li T."/>
            <person name="Zhao F."/>
            <person name="Overmann J."/>
            <person name="Bryant D.A."/>
            <person name="Richardson P."/>
        </authorList>
    </citation>
    <scope>NUCLEOTIDE SEQUENCE [LARGE SCALE GENOMIC DNA]</scope>
    <source>
        <strain>ATCC 35110 / GB-78</strain>
    </source>
</reference>
<name>Y1382_CHLT3</name>
<proteinExistence type="inferred from homology"/>
<sequence length="129" mass="14719">MNTNVAFGKKGEDMASAFLKKCGYQILRRNYRSGNNEIDLITKKDNIVAFVEVKTRHNLNYGHPAEAVTLSKQKELIKAAQNFINDNPSQGVDYRFDVVAIILDESKRNAFNEPCEDIFFIEDAFRTLP</sequence>
<dbReference type="EMBL" id="CP001100">
    <property type="protein sequence ID" value="ACF13845.1"/>
    <property type="molecule type" value="Genomic_DNA"/>
</dbReference>
<dbReference type="RefSeq" id="WP_012499929.1">
    <property type="nucleotide sequence ID" value="NC_011026.1"/>
</dbReference>
<dbReference type="SMR" id="B3QZF2"/>
<dbReference type="STRING" id="517418.Ctha_1382"/>
<dbReference type="KEGG" id="cts:Ctha_1382"/>
<dbReference type="eggNOG" id="COG0792">
    <property type="taxonomic scope" value="Bacteria"/>
</dbReference>
<dbReference type="HOGENOM" id="CLU_115353_2_3_10"/>
<dbReference type="OrthoDB" id="9802516at2"/>
<dbReference type="Proteomes" id="UP000001208">
    <property type="component" value="Chromosome"/>
</dbReference>
<dbReference type="GO" id="GO:0003676">
    <property type="term" value="F:nucleic acid binding"/>
    <property type="evidence" value="ECO:0007669"/>
    <property type="project" value="InterPro"/>
</dbReference>
<dbReference type="CDD" id="cd20736">
    <property type="entry name" value="PoNe_Nuclease"/>
    <property type="match status" value="1"/>
</dbReference>
<dbReference type="Gene3D" id="3.40.1350.10">
    <property type="match status" value="1"/>
</dbReference>
<dbReference type="HAMAP" id="MF_00048">
    <property type="entry name" value="UPF0102"/>
    <property type="match status" value="1"/>
</dbReference>
<dbReference type="InterPro" id="IPR011335">
    <property type="entry name" value="Restrct_endonuc-II-like"/>
</dbReference>
<dbReference type="InterPro" id="IPR011856">
    <property type="entry name" value="tRNA_endonuc-like_dom_sf"/>
</dbReference>
<dbReference type="InterPro" id="IPR003509">
    <property type="entry name" value="UPF0102_YraN-like"/>
</dbReference>
<dbReference type="NCBIfam" id="NF009150">
    <property type="entry name" value="PRK12497.1-3"/>
    <property type="match status" value="1"/>
</dbReference>
<dbReference type="NCBIfam" id="TIGR00252">
    <property type="entry name" value="YraN family protein"/>
    <property type="match status" value="1"/>
</dbReference>
<dbReference type="PANTHER" id="PTHR34039">
    <property type="entry name" value="UPF0102 PROTEIN YRAN"/>
    <property type="match status" value="1"/>
</dbReference>
<dbReference type="PANTHER" id="PTHR34039:SF1">
    <property type="entry name" value="UPF0102 PROTEIN YRAN"/>
    <property type="match status" value="1"/>
</dbReference>
<dbReference type="Pfam" id="PF02021">
    <property type="entry name" value="UPF0102"/>
    <property type="match status" value="1"/>
</dbReference>
<dbReference type="SUPFAM" id="SSF52980">
    <property type="entry name" value="Restriction endonuclease-like"/>
    <property type="match status" value="1"/>
</dbReference>
<gene>
    <name type="ordered locus">Ctha_1382</name>
</gene>